<evidence type="ECO:0000250" key="1"/>
<evidence type="ECO:0000256" key="2">
    <source>
        <dbReference type="SAM" id="MobiDB-lite"/>
    </source>
</evidence>
<evidence type="ECO:0000305" key="3"/>
<comment type="function">
    <text>Core component of nucleosome. Nucleosomes wrap and compact DNA into chromatin, limiting DNA accessibility to the cellular machineries which require DNA as a template. Histones thereby play a central role in transcription regulation, DNA repair, DNA replication and chromosomal stability. DNA accessibility is regulated via a complex set of post-translational modifications of histones, also called histone code, and nucleosome remodeling.</text>
</comment>
<comment type="subunit">
    <text>The nucleosome is a histone octamer containing two molecules each of H2A, H2B, H3 and H4 assembled in one H3-H4 heterotetramer and two H2A-H2B heterodimers. The octamer wraps approximately 147 bp of DNA.</text>
</comment>
<comment type="subcellular location">
    <subcellularLocation>
        <location evidence="1">Nucleus</location>
    </subcellularLocation>
    <subcellularLocation>
        <location evidence="1">Chromosome</location>
    </subcellularLocation>
</comment>
<comment type="PTM">
    <text evidence="1">Monoubiquitinated by the UBC2-BRE1 complex to form H2BK123ub1. H2BK123ub1 gives a specific tag for epigenetic transcriptional activation and is also prerequisite for H3K4me and H3K79me formation. H2BK123ub1 also modulates the formation of double-strand breaks during meiosis and is a prerequisite for DNA-damage checkpoint activation (By similarity).</text>
</comment>
<comment type="PTM">
    <text evidence="1">Phosphorylated by STE20 to form H2BS10ph during progression through meiotic prophase. May be correlated with chromosome condensation (By similarity).</text>
</comment>
<comment type="PTM">
    <text evidence="1">Acetylated by GCN5 to form H2BK11ac and H2BK16ac. H2BK16ac can also be formed by ESA1. Acetylation of N-terminal lysines and particularly formation of H2BK11acK16ac has a positive effect on transcription (By similarity).</text>
</comment>
<comment type="PTM">
    <text evidence="1">Sumoylation to form H2BK6su or H2BK7su, and probably also H2BK16su or H2BK17su, occurs preferentially near the telomeres and represses gene transcription.</text>
</comment>
<comment type="similarity">
    <text evidence="3">Belongs to the histone H2B family.</text>
</comment>
<comment type="caution">
    <text evidence="3">To ensure consistency between histone entries, we follow the 'Brno' nomenclature for histone modifications, with positions referring to those used in the literature for the 'closest' model organism. Due to slight variations in histone sequences between organisms and to the presence of initiator methionine in UniProtKB/Swiss-Prot sequences, the actual positions of modified amino acids in the sequence generally differ. In this entry the following conventions are used: H2BK6ac = acetylated Lys-7; H2BK6su = sumoylated Lys-7; H2BK7ac = acetylated Lys-8; H2BK7su = sumoylated Lys-8; H2BS10ph = phosphorylated Ser-11; H2BK11ac = acetylated Lys-12; H2BK16ac = acetylated Lys-17; H2BK16su = sumoylated Lys-17; H2BK17su = sumoylated Lys-18; H2BK123ub1 = monoubiquitinated Lys-124.</text>
</comment>
<keyword id="KW-0007">Acetylation</keyword>
<keyword id="KW-0158">Chromosome</keyword>
<keyword id="KW-0238">DNA-binding</keyword>
<keyword id="KW-1017">Isopeptide bond</keyword>
<keyword id="KW-0544">Nucleosome core</keyword>
<keyword id="KW-0539">Nucleus</keyword>
<keyword id="KW-0597">Phosphoprotein</keyword>
<keyword id="KW-1185">Reference proteome</keyword>
<keyword id="KW-0832">Ubl conjugation</keyword>
<protein>
    <recommendedName>
        <fullName>Histone H2B.2</fullName>
    </recommendedName>
</protein>
<proteinExistence type="inferred from homology"/>
<organism>
    <name type="scientific">Candida albicans (strain SC5314 / ATCC MYA-2876)</name>
    <name type="common">Yeast</name>
    <dbReference type="NCBI Taxonomy" id="237561"/>
    <lineage>
        <taxon>Eukaryota</taxon>
        <taxon>Fungi</taxon>
        <taxon>Dikarya</taxon>
        <taxon>Ascomycota</taxon>
        <taxon>Saccharomycotina</taxon>
        <taxon>Pichiomycetes</taxon>
        <taxon>Debaryomycetaceae</taxon>
        <taxon>Candida/Lodderomyces clade</taxon>
        <taxon>Candida</taxon>
    </lineage>
</organism>
<name>H2B2_CANAL</name>
<reference key="1">
    <citation type="journal article" date="2004" name="Proc. Natl. Acad. Sci. U.S.A.">
        <title>The diploid genome sequence of Candida albicans.</title>
        <authorList>
            <person name="Jones T."/>
            <person name="Federspiel N.A."/>
            <person name="Chibana H."/>
            <person name="Dungan J."/>
            <person name="Kalman S."/>
            <person name="Magee B.B."/>
            <person name="Newport G."/>
            <person name="Thorstenson Y.R."/>
            <person name="Agabian N."/>
            <person name="Magee P.T."/>
            <person name="Davis R.W."/>
            <person name="Scherer S."/>
        </authorList>
    </citation>
    <scope>NUCLEOTIDE SEQUENCE [LARGE SCALE GENOMIC DNA]</scope>
    <source>
        <strain>SC5314 / ATCC MYA-2876</strain>
    </source>
</reference>
<reference key="2">
    <citation type="journal article" date="2007" name="Genome Biol.">
        <title>Assembly of the Candida albicans genome into sixteen supercontigs aligned on the eight chromosomes.</title>
        <authorList>
            <person name="van het Hoog M."/>
            <person name="Rast T.J."/>
            <person name="Martchenko M."/>
            <person name="Grindle S."/>
            <person name="Dignard D."/>
            <person name="Hogues H."/>
            <person name="Cuomo C."/>
            <person name="Berriman M."/>
            <person name="Scherer S."/>
            <person name="Magee B.B."/>
            <person name="Whiteway M."/>
            <person name="Chibana H."/>
            <person name="Nantel A."/>
            <person name="Magee P.T."/>
        </authorList>
    </citation>
    <scope>GENOME REANNOTATION</scope>
    <source>
        <strain>SC5314 / ATCC MYA-2876</strain>
    </source>
</reference>
<reference key="3">
    <citation type="journal article" date="2013" name="Genome Biol.">
        <title>Assembly of a phased diploid Candida albicans genome facilitates allele-specific measurements and provides a simple model for repeat and indel structure.</title>
        <authorList>
            <person name="Muzzey D."/>
            <person name="Schwartz K."/>
            <person name="Weissman J.S."/>
            <person name="Sherlock G."/>
        </authorList>
    </citation>
    <scope>NUCLEOTIDE SEQUENCE [LARGE SCALE GENOMIC DNA]</scope>
    <scope>GENOME REANNOTATION</scope>
    <source>
        <strain>SC5314 / ATCC MYA-2876</strain>
    </source>
</reference>
<feature type="initiator methionine" description="Removed" evidence="1">
    <location>
        <position position="1"/>
    </location>
</feature>
<feature type="chain" id="PRO_0000245456" description="Histone H2B.2">
    <location>
        <begin position="2"/>
        <end position="130"/>
    </location>
</feature>
<feature type="region of interest" description="Disordered" evidence="2">
    <location>
        <begin position="1"/>
        <end position="38"/>
    </location>
</feature>
<feature type="compositionally biased region" description="Basic and acidic residues" evidence="2">
    <location>
        <begin position="1"/>
        <end position="19"/>
    </location>
</feature>
<feature type="modified residue" description="N6-acetyllysine; alternate" evidence="1">
    <location>
        <position position="7"/>
    </location>
</feature>
<feature type="modified residue" description="N6-acetyllysine; alternate" evidence="1">
    <location>
        <position position="8"/>
    </location>
</feature>
<feature type="modified residue" description="Phosphoserine" evidence="1">
    <location>
        <position position="11"/>
    </location>
</feature>
<feature type="modified residue" description="N6-acetyllysine" evidence="1">
    <location>
        <position position="12"/>
    </location>
</feature>
<feature type="modified residue" description="N6-acetyllysine; alternate" evidence="1">
    <location>
        <position position="17"/>
    </location>
</feature>
<feature type="cross-link" description="Glycyl lysine isopeptide (Lys-Gly) (interchain with G-Cter in SUMO); alternate" evidence="1">
    <location>
        <position position="7"/>
    </location>
</feature>
<feature type="cross-link" description="Glycyl lysine isopeptide (Lys-Gly) (interchain with G-Cter in SUMO); alternate" evidence="1">
    <location>
        <position position="8"/>
    </location>
</feature>
<feature type="cross-link" description="Glycyl lysine isopeptide (Lys-Gly) (interchain with G-Cter in SUMO); alternate" evidence="1">
    <location>
        <position position="17"/>
    </location>
</feature>
<feature type="cross-link" description="Glycyl lysine isopeptide (Lys-Gly) (interchain with G-Cter in SUMO)" evidence="1">
    <location>
        <position position="18"/>
    </location>
</feature>
<feature type="cross-link" description="Glycyl lysine isopeptide (Lys-Gly) (interchain with G-Cter in ubiquitin)" evidence="1">
    <location>
        <position position="124"/>
    </location>
</feature>
<dbReference type="EMBL" id="CP017623">
    <property type="protein sequence ID" value="AOW26093.1"/>
    <property type="molecule type" value="Genomic_DNA"/>
</dbReference>
<dbReference type="RefSeq" id="XP_713656.1">
    <property type="nucleotide sequence ID" value="XM_708563.1"/>
</dbReference>
<dbReference type="SMR" id="Q59VP1"/>
<dbReference type="BioGRID" id="1227729">
    <property type="interactions" value="1"/>
</dbReference>
<dbReference type="FunCoup" id="Q59VP1">
    <property type="interactions" value="1176"/>
</dbReference>
<dbReference type="STRING" id="237561.Q59VP1"/>
<dbReference type="EnsemblFungi" id="C1_04180W_A-T">
    <property type="protein sequence ID" value="C1_04180W_A-T-p1"/>
    <property type="gene ID" value="C1_04180W_A"/>
</dbReference>
<dbReference type="GeneID" id="3644716"/>
<dbReference type="KEGG" id="cal:CAALFM_C104180WA"/>
<dbReference type="CGD" id="CAL0000199081">
    <property type="gene designation" value="orf19.8654"/>
</dbReference>
<dbReference type="VEuPathDB" id="FungiDB:C1_04180W_A"/>
<dbReference type="eggNOG" id="KOG1744">
    <property type="taxonomic scope" value="Eukaryota"/>
</dbReference>
<dbReference type="HOGENOM" id="CLU_075666_1_3_1"/>
<dbReference type="InParanoid" id="Q59VP1"/>
<dbReference type="OMA" id="SEVEYMG"/>
<dbReference type="OrthoDB" id="10254238at2759"/>
<dbReference type="PRO" id="PR:Q59VP1"/>
<dbReference type="Proteomes" id="UP000000559">
    <property type="component" value="Chromosome 1"/>
</dbReference>
<dbReference type="GO" id="GO:0000786">
    <property type="term" value="C:nucleosome"/>
    <property type="evidence" value="ECO:0007669"/>
    <property type="project" value="UniProtKB-KW"/>
</dbReference>
<dbReference type="GO" id="GO:0005634">
    <property type="term" value="C:nucleus"/>
    <property type="evidence" value="ECO:0007669"/>
    <property type="project" value="UniProtKB-SubCell"/>
</dbReference>
<dbReference type="GO" id="GO:0003677">
    <property type="term" value="F:DNA binding"/>
    <property type="evidence" value="ECO:0000314"/>
    <property type="project" value="CGD"/>
</dbReference>
<dbReference type="GO" id="GO:0046982">
    <property type="term" value="F:protein heterodimerization activity"/>
    <property type="evidence" value="ECO:0007669"/>
    <property type="project" value="InterPro"/>
</dbReference>
<dbReference type="GO" id="GO:0030527">
    <property type="term" value="F:structural constituent of chromatin"/>
    <property type="evidence" value="ECO:0007669"/>
    <property type="project" value="InterPro"/>
</dbReference>
<dbReference type="CDD" id="cd22910">
    <property type="entry name" value="HFD_H2B"/>
    <property type="match status" value="1"/>
</dbReference>
<dbReference type="FunFam" id="1.10.20.10:FF:000014">
    <property type="entry name" value="Histone H2B"/>
    <property type="match status" value="1"/>
</dbReference>
<dbReference type="Gene3D" id="1.10.20.10">
    <property type="entry name" value="Histone, subunit A"/>
    <property type="match status" value="1"/>
</dbReference>
<dbReference type="InterPro" id="IPR009072">
    <property type="entry name" value="Histone-fold"/>
</dbReference>
<dbReference type="InterPro" id="IPR007125">
    <property type="entry name" value="Histone_H2A/H2B/H3"/>
</dbReference>
<dbReference type="InterPro" id="IPR000558">
    <property type="entry name" value="Histone_H2B"/>
</dbReference>
<dbReference type="InterPro" id="IPR055333">
    <property type="entry name" value="HISTONE_H2B_site"/>
</dbReference>
<dbReference type="PANTHER" id="PTHR23428">
    <property type="entry name" value="HISTONE H2B"/>
    <property type="match status" value="1"/>
</dbReference>
<dbReference type="Pfam" id="PF00125">
    <property type="entry name" value="Histone"/>
    <property type="match status" value="1"/>
</dbReference>
<dbReference type="PRINTS" id="PR00621">
    <property type="entry name" value="HISTONEH2B"/>
</dbReference>
<dbReference type="SMART" id="SM00427">
    <property type="entry name" value="H2B"/>
    <property type="match status" value="1"/>
</dbReference>
<dbReference type="SUPFAM" id="SSF47113">
    <property type="entry name" value="Histone-fold"/>
    <property type="match status" value="1"/>
</dbReference>
<dbReference type="PROSITE" id="PS00357">
    <property type="entry name" value="HISTONE_H2B"/>
    <property type="match status" value="1"/>
</dbReference>
<gene>
    <name type="primary">HTB2</name>
    <name type="ordered locus">CAALFM_C104180WA</name>
    <name type="ORF">CaO19.1052</name>
    <name type="ORF">CaO19.8654</name>
</gene>
<sequence>MAPKAEKKPASKAPAEKKPAAKKTASTDGAKKRTKARKETYSSYIYKVLKQTHPDTGISQKAMSIMNSFVNDIFERIASEASKLAAYNKKSTISAREIQTAVRLILPGELAKHAVSEGTRAVTKYSSASN</sequence>
<accession>Q59VP1</accession>
<accession>A0A1D8PD85</accession>